<gene>
    <name type="primary">VWA5A</name>
    <name type="synonym">BCSC1</name>
    <name type="synonym">LOH11CR2A</name>
</gene>
<sequence>MVHFCGLLTLHREPVPLKSISVSVNIYEFVAGVSATLNYENEEKVPLEAFFVFPMDEDSAVYSFEALVDGKKIVAELQDKMKARTNYEKAISQGHQAFLLEGDSSSRDVFSCNVGNLQPGSKAAVTLKYVQELPLEADGALRFVLPAVLNPRYQFSGSSKDSCLNVKTPIVPVEDLPYTLSMVATIDSQHGIEKVQSNCPLSPTEYLGEDKTSAQVSLAAGHKFDRDVELLIYYNEVHTPSVVLEMGMPNMKPGHLMGDPSAMVSFYPNIPEDQPSNTCGEFIFLMDRSGSMQSPMSSQDTSQLRIQAAKETLILLLKSLPIGCYFNIYGFGSSYEACFPESVKYTQQTMEEALGRVKLMQADLGGTEILAPLQNIYRGPSIPGHPLQLFVFTDGEVTDTFSVIKEVRINRQKHRCFSFGIGEGTSTSLIKGIARASGGTSEFITGKDRMQSKALRTLKRSLQPVVEDVSLSWHLPPGLSAKMLSPEQTVIFRGQRLISYAQLTGRMPAAETTGEVCLKYTLQGKTFEDKVTFPLQPKPDVNLTIHRLAAKSLLQTKDMGLRETPASDKKDALNLSLESGVISSFTAFIAINKELNKPVQGPLAHRDVPRPILLGASAPLKIKCQSGFRKALHSDRPPSASQPRGELMCYKAKTFQMDDYSLCGLISHKDQHSPGFGENHLVQLIYHQNANGSWDLNEDLAKILGMSLEEIMAAQPAELVDSSGWATILAVIWLHSNGKDLKCEWELLERKAVAWMRAHAGSTMPSVVKAAITFLKSSVDPAIFAF</sequence>
<protein>
    <recommendedName>
        <fullName>von Willebrand factor A domain-containing protein 5A</fullName>
    </recommendedName>
    <alternativeName>
        <fullName>Breast cancer suppressor candidate 1</fullName>
        <shortName>BCSC-1</shortName>
    </alternativeName>
    <alternativeName>
        <fullName>Loss of heterozygosity 11 chromosomal region 2 gene A protein</fullName>
    </alternativeName>
</protein>
<keyword id="KW-0025">Alternative splicing</keyword>
<keyword id="KW-1267">Proteomics identification</keyword>
<keyword id="KW-1185">Reference proteome</keyword>
<keyword id="KW-0043">Tumor suppressor</keyword>
<organism>
    <name type="scientific">Homo sapiens</name>
    <name type="common">Human</name>
    <dbReference type="NCBI Taxonomy" id="9606"/>
    <lineage>
        <taxon>Eukaryota</taxon>
        <taxon>Metazoa</taxon>
        <taxon>Chordata</taxon>
        <taxon>Craniata</taxon>
        <taxon>Vertebrata</taxon>
        <taxon>Euteleostomi</taxon>
        <taxon>Mammalia</taxon>
        <taxon>Eutheria</taxon>
        <taxon>Euarchontoglires</taxon>
        <taxon>Primates</taxon>
        <taxon>Haplorrhini</taxon>
        <taxon>Catarrhini</taxon>
        <taxon>Hominidae</taxon>
        <taxon>Homo</taxon>
    </lineage>
</organism>
<accession>O00534</accession>
<accession>Q6UN19</accession>
<accession>Q6UN20</accession>
<accession>Q9BVF8</accession>
<name>VMA5A_HUMAN</name>
<feature type="chain" id="PRO_0000084411" description="von Willebrand factor A domain-containing protein 5A">
    <location>
        <begin position="1"/>
        <end position="786"/>
    </location>
</feature>
<feature type="domain" description="VIT" evidence="2">
    <location>
        <begin position="1"/>
        <end position="131"/>
    </location>
</feature>
<feature type="domain" description="VWFA" evidence="1">
    <location>
        <begin position="281"/>
        <end position="462"/>
    </location>
</feature>
<feature type="splice variant" id="VSP_013364" description="In isoform 4." evidence="5">
    <original>SF</original>
    <variation>RT</variation>
    <location>
        <begin position="265"/>
        <end position="266"/>
    </location>
</feature>
<feature type="splice variant" id="VSP_013365" description="In isoform 4." evidence="5">
    <location>
        <begin position="267"/>
        <end position="786"/>
    </location>
</feature>
<feature type="splice variant" id="VSP_013367" description="In isoform 2." evidence="5">
    <original>LFVFTDGEVTDTFSVIKEVRINRQKHRCFSFGIGEGTS</original>
    <variation>VFERPYTLTVLLLHLSPEGNLCVIRPRHSRWTITVSVG</variation>
    <location>
        <begin position="389"/>
        <end position="426"/>
    </location>
</feature>
<feature type="splice variant" id="VSP_013366" description="In isoform 3." evidence="5 6 7">
    <location>
        <begin position="416"/>
        <end position="786"/>
    </location>
</feature>
<feature type="splice variant" id="VSP_013368" description="In isoform 2." evidence="5">
    <location>
        <begin position="427"/>
        <end position="786"/>
    </location>
</feature>
<feature type="sequence variant" id="VAR_059692" description="In dbSNP:rs35496433.">
    <original>S</original>
    <variation>G</variation>
    <location>
        <position position="202"/>
    </location>
</feature>
<feature type="sequence variant" id="VAR_059693" description="In dbSNP:rs35215239.">
    <original>E</original>
    <variation>K</variation>
    <location>
        <position position="205"/>
    </location>
</feature>
<feature type="sequence variant" id="VAR_014193" description="In dbSNP:rs2276054." evidence="4">
    <original>S</original>
    <variation>I</variation>
    <location>
        <position position="499"/>
    </location>
</feature>
<feature type="sequence variant" id="VAR_014194" description="In dbSNP:rs2276053." evidence="4">
    <original>R</original>
    <variation>K</variation>
    <location>
        <position position="506"/>
    </location>
</feature>
<feature type="sequence variant" id="VAR_014195" description="In dbSNP:rs117689747." evidence="4">
    <original>R</original>
    <variation>C</variation>
    <location>
        <position position="757"/>
    </location>
</feature>
<feature type="sequence variant" id="VAR_014196" description="In dbSNP:rs200614108." evidence="4">
    <original>H</original>
    <variation>R</variation>
    <location>
        <position position="759"/>
    </location>
</feature>
<evidence type="ECO:0000255" key="1">
    <source>
        <dbReference type="PROSITE-ProRule" id="PRU00219"/>
    </source>
</evidence>
<evidence type="ECO:0000255" key="2">
    <source>
        <dbReference type="PROSITE-ProRule" id="PRU00801"/>
    </source>
</evidence>
<evidence type="ECO:0000269" key="3">
    <source>
    </source>
</evidence>
<evidence type="ECO:0000269" key="4">
    <source>
    </source>
</evidence>
<evidence type="ECO:0000303" key="5">
    <source>
    </source>
</evidence>
<evidence type="ECO:0000303" key="6">
    <source>
    </source>
</evidence>
<evidence type="ECO:0000303" key="7">
    <source ref="2"/>
</evidence>
<comment type="function">
    <text>May play a role in tumorigenesis as a tumor suppressor. Altered expression of this protein and disruption of the molecular pathway it is involved in, may contribute directly to or modify tumorigenesis.</text>
</comment>
<comment type="interaction">
    <interactant intactId="EBI-12246480">
        <id>O00534</id>
    </interactant>
    <interactant intactId="EBI-16439278">
        <id>Q6FHY5</id>
        <label>MEOX2</label>
    </interactant>
    <organismsDiffer>false</organismsDiffer>
    <experiments>3</experiments>
</comment>
<comment type="interaction">
    <interactant intactId="EBI-12246480">
        <id>O00534</id>
    </interactant>
    <interactant intactId="EBI-739759">
        <id>Q9NRG1</id>
        <label>PRTFDC1</label>
    </interactant>
    <organismsDiffer>false</organismsDiffer>
    <experiments>3</experiments>
</comment>
<comment type="interaction">
    <interactant intactId="EBI-12246480">
        <id>O00534</id>
    </interactant>
    <interactant intactId="EBI-2659201">
        <id>Q96BD6</id>
        <label>SPSB1</label>
    </interactant>
    <organismsDiffer>false</organismsDiffer>
    <experiments>3</experiments>
</comment>
<comment type="alternative products">
    <event type="alternative splicing"/>
    <isoform>
        <id>O00534-1</id>
        <name>1</name>
        <name>c/f</name>
        <sequence type="displayed"/>
    </isoform>
    <isoform>
        <id>O00534-2</id>
        <name>2</name>
        <name>g</name>
        <sequence type="described" ref="VSP_013367 VSP_013368"/>
    </isoform>
    <isoform>
        <id>O00534-3</id>
        <name>3</name>
        <name>a/d</name>
        <sequence type="described" ref="VSP_013366"/>
    </isoform>
    <isoform>
        <id>O00534-4</id>
        <name>4</name>
        <name>b/e</name>
        <sequence type="described" ref="VSP_013364 VSP_013365"/>
    </isoform>
</comment>
<comment type="tissue specificity">
    <text evidence="3">Expressed at low level in many tissues. Not expressed in 80% of tumor cell lines tested.</text>
</comment>
<reference key="1">
    <citation type="journal article" date="2003" name="Proc. Natl. Acad. Sci. U.S.A.">
        <title>The BCSC-1 locus at chromosome 11q23-q24 is a candidate tumor suppressor gene.</title>
        <authorList>
            <person name="Martin E.S."/>
            <person name="Cesari R."/>
            <person name="Pentimalli F."/>
            <person name="Yoder K."/>
            <person name="Fishel R."/>
            <person name="Himelstein A.L."/>
            <person name="Martin S.E."/>
            <person name="Godwin A.K."/>
            <person name="Negrini M."/>
            <person name="Croce C.M."/>
        </authorList>
    </citation>
    <scope>NUCLEOTIDE SEQUENCE [MRNA] (ISOFORMS 1; 2; 3 AND 4)</scope>
    <scope>POSSIBLE FUNCTION</scope>
    <scope>TISSUE SPECIFICITY</scope>
</reference>
<reference key="2">
    <citation type="submission" date="2003-05" db="EMBL/GenBank/DDBJ databases">
        <title>Cloning of human full-length CDSs in BD Creator(TM) system donor vector.</title>
        <authorList>
            <person name="Kalnine N."/>
            <person name="Chen X."/>
            <person name="Rolfs A."/>
            <person name="Halleck A."/>
            <person name="Hines L."/>
            <person name="Eisenstein S."/>
            <person name="Koundinya M."/>
            <person name="Raphael J."/>
            <person name="Moreira D."/>
            <person name="Kelley T."/>
            <person name="LaBaer J."/>
            <person name="Lin Y."/>
            <person name="Phelan M."/>
            <person name="Farmer A."/>
        </authorList>
    </citation>
    <scope>NUCLEOTIDE SEQUENCE [LARGE SCALE MRNA] (ISOFORM 3)</scope>
</reference>
<reference key="3">
    <citation type="journal article" date="2004" name="Genome Res.">
        <title>The status, quality, and expansion of the NIH full-length cDNA project: the Mammalian Gene Collection (MGC).</title>
        <authorList>
            <consortium name="The MGC Project Team"/>
        </authorList>
    </citation>
    <scope>NUCLEOTIDE SEQUENCE [LARGE SCALE MRNA] (ISOFORM 3)</scope>
    <source>
        <tissue>Cervix</tissue>
    </source>
</reference>
<reference key="4">
    <citation type="journal article" date="1997" name="Genomics">
        <title>Molecular cloning and characterization of LOH11CR2A, a new gene within a refined minimal region of LOH at 11q23.</title>
        <authorList>
            <person name="Monaco C."/>
            <person name="Negrini M."/>
            <person name="Sozzi G."/>
            <person name="Veronese M.L."/>
            <person name="Vorechovsky I."/>
            <person name="Godwin A.K."/>
            <person name="Croce C.M."/>
        </authorList>
    </citation>
    <scope>NUCLEOTIDE SEQUENCE [MRNA] OF 350-786 (ISOFORM 1)</scope>
    <scope>VARIANTS ILE-499; LYS-506; CYS-757 AND ARG-759</scope>
</reference>
<proteinExistence type="evidence at protein level"/>
<dbReference type="EMBL" id="AY366505">
    <property type="protein sequence ID" value="AAQ94873.1"/>
    <property type="molecule type" value="mRNA"/>
</dbReference>
<dbReference type="EMBL" id="AY366508">
    <property type="protein sequence ID" value="AAQ94876.1"/>
    <property type="molecule type" value="mRNA"/>
</dbReference>
<dbReference type="EMBL" id="AY366503">
    <property type="protein sequence ID" value="AAQ94871.1"/>
    <property type="molecule type" value="mRNA"/>
</dbReference>
<dbReference type="EMBL" id="AY366506">
    <property type="protein sequence ID" value="AAQ94874.1"/>
    <property type="molecule type" value="mRNA"/>
</dbReference>
<dbReference type="EMBL" id="AY366504">
    <property type="protein sequence ID" value="AAQ94872.1"/>
    <property type="molecule type" value="mRNA"/>
</dbReference>
<dbReference type="EMBL" id="AY366507">
    <property type="protein sequence ID" value="AAQ94875.1"/>
    <property type="molecule type" value="mRNA"/>
</dbReference>
<dbReference type="EMBL" id="AY366501">
    <property type="protein sequence ID" value="AAQ94867.1"/>
    <property type="molecule type" value="Genomic_DNA"/>
</dbReference>
<dbReference type="EMBL" id="AY366501">
    <property type="protein sequence ID" value="AAQ94868.1"/>
    <property type="molecule type" value="Genomic_DNA"/>
</dbReference>
<dbReference type="EMBL" id="AY366501">
    <property type="protein sequence ID" value="AAQ94869.1"/>
    <property type="molecule type" value="Genomic_DNA"/>
</dbReference>
<dbReference type="EMBL" id="BT006655">
    <property type="protein sequence ID" value="AAP35301.1"/>
    <property type="molecule type" value="mRNA"/>
</dbReference>
<dbReference type="EMBL" id="BC001234">
    <property type="protein sequence ID" value="AAH01234.1"/>
    <property type="molecule type" value="mRNA"/>
</dbReference>
<dbReference type="EMBL" id="AF002672">
    <property type="protein sequence ID" value="AAB60942.1"/>
    <property type="molecule type" value="mRNA"/>
</dbReference>
<dbReference type="CCDS" id="CCDS8444.1">
    <molecule id="O00534-1"/>
</dbReference>
<dbReference type="CCDS" id="CCDS8445.1">
    <molecule id="O00534-3"/>
</dbReference>
<dbReference type="RefSeq" id="NP_001123614.1">
    <molecule id="O00534-1"/>
    <property type="nucleotide sequence ID" value="NM_001130142.2"/>
</dbReference>
<dbReference type="RefSeq" id="NP_055437.2">
    <molecule id="O00534-1"/>
    <property type="nucleotide sequence ID" value="NM_014622.4"/>
</dbReference>
<dbReference type="RefSeq" id="NP_938057.1">
    <molecule id="O00534-3"/>
    <property type="nucleotide sequence ID" value="NM_198315.3"/>
</dbReference>
<dbReference type="SMR" id="O00534"/>
<dbReference type="BioGRID" id="110197">
    <property type="interactions" value="51"/>
</dbReference>
<dbReference type="FunCoup" id="O00534">
    <property type="interactions" value="592"/>
</dbReference>
<dbReference type="IntAct" id="O00534">
    <property type="interactions" value="40"/>
</dbReference>
<dbReference type="STRING" id="9606.ENSP00000407726"/>
<dbReference type="iPTMnet" id="O00534"/>
<dbReference type="PhosphoSitePlus" id="O00534"/>
<dbReference type="SwissPalm" id="O00534"/>
<dbReference type="BioMuta" id="VWA5A"/>
<dbReference type="jPOST" id="O00534"/>
<dbReference type="MassIVE" id="O00534"/>
<dbReference type="PaxDb" id="9606-ENSP00000407726"/>
<dbReference type="PeptideAtlas" id="O00534"/>
<dbReference type="ProteomicsDB" id="47959">
    <molecule id="O00534-1"/>
</dbReference>
<dbReference type="ProteomicsDB" id="47960">
    <molecule id="O00534-2"/>
</dbReference>
<dbReference type="ProteomicsDB" id="47961">
    <molecule id="O00534-3"/>
</dbReference>
<dbReference type="ProteomicsDB" id="47962">
    <molecule id="O00534-4"/>
</dbReference>
<dbReference type="Pumba" id="O00534"/>
<dbReference type="Antibodypedia" id="32857">
    <property type="antibodies" value="379 antibodies from 26 providers"/>
</dbReference>
<dbReference type="DNASU" id="4013"/>
<dbReference type="Ensembl" id="ENST00000361352.9">
    <molecule id="O00534-3"/>
    <property type="protein sequence ID" value="ENSP00000355070.5"/>
    <property type="gene ID" value="ENSG00000110002.16"/>
</dbReference>
<dbReference type="Ensembl" id="ENST00000392748.5">
    <molecule id="O00534-1"/>
    <property type="protein sequence ID" value="ENSP00000376504.1"/>
    <property type="gene ID" value="ENSG00000110002.16"/>
</dbReference>
<dbReference type="Ensembl" id="ENST00000449321.5">
    <molecule id="O00534-3"/>
    <property type="protein sequence ID" value="ENSP00000404683.1"/>
    <property type="gene ID" value="ENSG00000110002.16"/>
</dbReference>
<dbReference type="Ensembl" id="ENST00000456829.7">
    <molecule id="O00534-1"/>
    <property type="protein sequence ID" value="ENSP00000407726.2"/>
    <property type="gene ID" value="ENSG00000110002.16"/>
</dbReference>
<dbReference type="GeneID" id="4013"/>
<dbReference type="KEGG" id="hsa:4013"/>
<dbReference type="MANE-Select" id="ENST00000456829.7">
    <property type="protein sequence ID" value="ENSP00000407726.2"/>
    <property type="RefSeq nucleotide sequence ID" value="NM_001130142.2"/>
    <property type="RefSeq protein sequence ID" value="NP_001123614.1"/>
</dbReference>
<dbReference type="UCSC" id="uc001pzr.4">
    <molecule id="O00534-1"/>
    <property type="organism name" value="human"/>
</dbReference>
<dbReference type="AGR" id="HGNC:6658"/>
<dbReference type="CTD" id="4013"/>
<dbReference type="DisGeNET" id="4013"/>
<dbReference type="GeneCards" id="VWA5A"/>
<dbReference type="HGNC" id="HGNC:6658">
    <property type="gene designation" value="VWA5A"/>
</dbReference>
<dbReference type="HPA" id="ENSG00000110002">
    <property type="expression patterns" value="Low tissue specificity"/>
</dbReference>
<dbReference type="MIM" id="602929">
    <property type="type" value="gene"/>
</dbReference>
<dbReference type="neXtProt" id="NX_O00534"/>
<dbReference type="OpenTargets" id="ENSG00000110002"/>
<dbReference type="PharmGKB" id="PA162409005"/>
<dbReference type="VEuPathDB" id="HostDB:ENSG00000110002"/>
<dbReference type="eggNOG" id="ENOG502QRPK">
    <property type="taxonomic scope" value="Eukaryota"/>
</dbReference>
<dbReference type="GeneTree" id="ENSGT00940000159961"/>
<dbReference type="HOGENOM" id="CLU_003826_4_0_1"/>
<dbReference type="InParanoid" id="O00534"/>
<dbReference type="OMA" id="FNVIRFD"/>
<dbReference type="OrthoDB" id="1729737at2759"/>
<dbReference type="PAN-GO" id="O00534">
    <property type="GO annotations" value="0 GO annotations based on evolutionary models"/>
</dbReference>
<dbReference type="PhylomeDB" id="O00534"/>
<dbReference type="TreeFam" id="TF329720"/>
<dbReference type="PathwayCommons" id="O00534"/>
<dbReference type="SignaLink" id="O00534"/>
<dbReference type="BioGRID-ORCS" id="4013">
    <property type="hits" value="4 hits in 1159 CRISPR screens"/>
</dbReference>
<dbReference type="ChiTaRS" id="VWA5A">
    <property type="organism name" value="human"/>
</dbReference>
<dbReference type="GenomeRNAi" id="4013"/>
<dbReference type="Pharos" id="O00534">
    <property type="development level" value="Tbio"/>
</dbReference>
<dbReference type="PRO" id="PR:O00534"/>
<dbReference type="Proteomes" id="UP000005640">
    <property type="component" value="Chromosome 11"/>
</dbReference>
<dbReference type="RNAct" id="O00534">
    <property type="molecule type" value="protein"/>
</dbReference>
<dbReference type="Bgee" id="ENSG00000110002">
    <property type="expression patterns" value="Expressed in islet of Langerhans and 191 other cell types or tissues"/>
</dbReference>
<dbReference type="ExpressionAtlas" id="O00534">
    <property type="expression patterns" value="baseline and differential"/>
</dbReference>
<dbReference type="GO" id="GO:0005654">
    <property type="term" value="C:nucleoplasm"/>
    <property type="evidence" value="ECO:0000314"/>
    <property type="project" value="HPA"/>
</dbReference>
<dbReference type="CDD" id="cd01461">
    <property type="entry name" value="vWA_interalpha_trypsin_inhibitor"/>
    <property type="match status" value="1"/>
</dbReference>
<dbReference type="FunFam" id="3.40.50.410:FF:000069">
    <property type="entry name" value="von Willebrand factor A domain containing 5A"/>
    <property type="match status" value="1"/>
</dbReference>
<dbReference type="Gene3D" id="3.40.50.410">
    <property type="entry name" value="von Willebrand factor, type A domain"/>
    <property type="match status" value="1"/>
</dbReference>
<dbReference type="InterPro" id="IPR013694">
    <property type="entry name" value="VIT"/>
</dbReference>
<dbReference type="InterPro" id="IPR002035">
    <property type="entry name" value="VWF_A"/>
</dbReference>
<dbReference type="InterPro" id="IPR036465">
    <property type="entry name" value="vWFA_dom_sf"/>
</dbReference>
<dbReference type="PANTHER" id="PTHR45737">
    <property type="entry name" value="VON WILLEBRAND FACTOR A DOMAIN-CONTAINING PROTEIN 5A"/>
    <property type="match status" value="1"/>
</dbReference>
<dbReference type="PANTHER" id="PTHR45737:SF6">
    <property type="entry name" value="VON WILLEBRAND FACTOR A DOMAIN-CONTAINING PROTEIN 5A"/>
    <property type="match status" value="1"/>
</dbReference>
<dbReference type="Pfam" id="PF08487">
    <property type="entry name" value="VIT"/>
    <property type="match status" value="1"/>
</dbReference>
<dbReference type="Pfam" id="PF13768">
    <property type="entry name" value="VWA_3"/>
    <property type="match status" value="1"/>
</dbReference>
<dbReference type="SMART" id="SM00609">
    <property type="entry name" value="VIT"/>
    <property type="match status" value="1"/>
</dbReference>
<dbReference type="SMART" id="SM00327">
    <property type="entry name" value="VWA"/>
    <property type="match status" value="1"/>
</dbReference>
<dbReference type="SUPFAM" id="SSF53300">
    <property type="entry name" value="vWA-like"/>
    <property type="match status" value="1"/>
</dbReference>
<dbReference type="PROSITE" id="PS51468">
    <property type="entry name" value="VIT"/>
    <property type="match status" value="1"/>
</dbReference>
<dbReference type="PROSITE" id="PS50234">
    <property type="entry name" value="VWFA"/>
    <property type="match status" value="1"/>
</dbReference>